<sequence length="149" mass="15941">MATSSTGMGTSEALRYSEYMPGPNAGSSTDIDRRLGGTLIAVGLGVAAAAFAGRFAFQLWKPLGQVIAESAKKIPTPSLSYYYKGGFEQKMNRREASLILGVSPSASKSKIRAAHRKIMILNHPDKGGSPYMAMKINEAKDLLESTTKP</sequence>
<name>DJC15_XENTR</name>
<keyword id="KW-0217">Developmental protein</keyword>
<keyword id="KW-0472">Membrane</keyword>
<keyword id="KW-0496">Mitochondrion</keyword>
<keyword id="KW-0999">Mitochondrion inner membrane</keyword>
<keyword id="KW-0653">Protein transport</keyword>
<keyword id="KW-1185">Reference proteome</keyword>
<keyword id="KW-0811">Translocation</keyword>
<keyword id="KW-0812">Transmembrane</keyword>
<keyword id="KW-1133">Transmembrane helix</keyword>
<keyword id="KW-0813">Transport</keyword>
<comment type="function">
    <text evidence="1 5">Negative regulator of the mitochondrial respiratory chain (By similarity). Plays a role in the translocation of proteins across the mitochondrial inner membrane (By similarity). Involved in pronephric kidney development at the early tadpole stage.</text>
</comment>
<comment type="subcellular location">
    <subcellularLocation>
        <location evidence="1">Mitochondrion inner membrane</location>
        <topology evidence="1">Single-pass membrane protein</topology>
    </subcellularLocation>
</comment>
<comment type="tissue specificity">
    <text evidence="5">Expressed in the developing pronephros.</text>
</comment>
<organism>
    <name type="scientific">Xenopus tropicalis</name>
    <name type="common">Western clawed frog</name>
    <name type="synonym">Silurana tropicalis</name>
    <dbReference type="NCBI Taxonomy" id="8364"/>
    <lineage>
        <taxon>Eukaryota</taxon>
        <taxon>Metazoa</taxon>
        <taxon>Chordata</taxon>
        <taxon>Craniata</taxon>
        <taxon>Vertebrata</taxon>
        <taxon>Euteleostomi</taxon>
        <taxon>Amphibia</taxon>
        <taxon>Batrachia</taxon>
        <taxon>Anura</taxon>
        <taxon>Pipoidea</taxon>
        <taxon>Pipidae</taxon>
        <taxon>Xenopodinae</taxon>
        <taxon>Xenopus</taxon>
        <taxon>Silurana</taxon>
    </lineage>
</organism>
<reference evidence="7" key="1">
    <citation type="submission" date="2004-07" db="EMBL/GenBank/DDBJ databases">
        <authorList>
            <consortium name="NIH - Xenopus Gene Collection (XGC) project"/>
        </authorList>
    </citation>
    <scope>NUCLEOTIDE SEQUENCE [LARGE SCALE MRNA]</scope>
    <source>
        <tissue evidence="7">Embryo</tissue>
    </source>
</reference>
<reference evidence="6" key="2">
    <citation type="journal article" date="2008" name="Mech. Dev.">
        <title>A functional screen for genes involved in Xenopus pronephros development.</title>
        <authorList>
            <person name="Kyuno J."/>
            <person name="Masse K."/>
            <person name="Jones E.A."/>
        </authorList>
    </citation>
    <scope>FUNCTION</scope>
    <scope>TISSUE SPECIFICITY</scope>
</reference>
<proteinExistence type="evidence at transcript level"/>
<gene>
    <name evidence="7" type="primary">dnajc15</name>
</gene>
<protein>
    <recommendedName>
        <fullName evidence="2">DnaJ homolog subfamily C member 15</fullName>
    </recommendedName>
</protein>
<accession>Q6DDA1</accession>
<feature type="chain" id="PRO_0000391688" description="DnaJ homolog subfamily C member 15">
    <location>
        <begin position="1"/>
        <end position="149"/>
    </location>
</feature>
<feature type="topological domain" description="Mitochondrial intermembrane" evidence="3">
    <location>
        <begin position="1"/>
        <end position="34"/>
    </location>
</feature>
<feature type="transmembrane region" description="Helical" evidence="3">
    <location>
        <begin position="35"/>
        <end position="57"/>
    </location>
</feature>
<feature type="topological domain" description="Mitochondrial matrix" evidence="3">
    <location>
        <begin position="58"/>
        <end position="149"/>
    </location>
</feature>
<feature type="domain" description="J" evidence="4">
    <location>
        <begin position="95"/>
        <end position="149"/>
    </location>
</feature>
<evidence type="ECO:0000250" key="1"/>
<evidence type="ECO:0000250" key="2">
    <source>
        <dbReference type="UniProtKB" id="Q9Y5T4"/>
    </source>
</evidence>
<evidence type="ECO:0000255" key="3"/>
<evidence type="ECO:0000255" key="4">
    <source>
        <dbReference type="PROSITE-ProRule" id="PRU00286"/>
    </source>
</evidence>
<evidence type="ECO:0000269" key="5">
    <source>
    </source>
</evidence>
<evidence type="ECO:0000305" key="6"/>
<evidence type="ECO:0000312" key="7">
    <source>
        <dbReference type="EMBL" id="AAH77694.1"/>
    </source>
</evidence>
<dbReference type="EMBL" id="BC077694">
    <property type="protein sequence ID" value="AAH77694.1"/>
    <property type="molecule type" value="mRNA"/>
</dbReference>
<dbReference type="RefSeq" id="NP_001005145.1">
    <property type="nucleotide sequence ID" value="NM_001005145.2"/>
</dbReference>
<dbReference type="SMR" id="Q6DDA1"/>
<dbReference type="FunCoup" id="Q6DDA1">
    <property type="interactions" value="107"/>
</dbReference>
<dbReference type="STRING" id="8364.ENSXETP00000015573"/>
<dbReference type="PaxDb" id="8364-ENSXETP00000031900"/>
<dbReference type="DNASU" id="448735"/>
<dbReference type="GeneID" id="448735"/>
<dbReference type="KEGG" id="xtr:448735"/>
<dbReference type="AGR" id="Xenbase:XB-GENE-5716026"/>
<dbReference type="CTD" id="29103"/>
<dbReference type="Xenbase" id="XB-GENE-5716026">
    <property type="gene designation" value="dnajc15"/>
</dbReference>
<dbReference type="eggNOG" id="KOG0723">
    <property type="taxonomic scope" value="Eukaryota"/>
</dbReference>
<dbReference type="HOGENOM" id="CLU_017633_13_3_1"/>
<dbReference type="InParanoid" id="Q6DDA1"/>
<dbReference type="OrthoDB" id="240298at2759"/>
<dbReference type="TreeFam" id="TF320584"/>
<dbReference type="Proteomes" id="UP000008143">
    <property type="component" value="Chromosome 2"/>
</dbReference>
<dbReference type="GO" id="GO:0005743">
    <property type="term" value="C:mitochondrial inner membrane"/>
    <property type="evidence" value="ECO:0007669"/>
    <property type="project" value="UniProtKB-SubCell"/>
</dbReference>
<dbReference type="GO" id="GO:0048793">
    <property type="term" value="P:pronephros development"/>
    <property type="evidence" value="ECO:0000315"/>
    <property type="project" value="UniProtKB"/>
</dbReference>
<dbReference type="GO" id="GO:0015031">
    <property type="term" value="P:protein transport"/>
    <property type="evidence" value="ECO:0007669"/>
    <property type="project" value="UniProtKB-KW"/>
</dbReference>
<dbReference type="CDD" id="cd06257">
    <property type="entry name" value="DnaJ"/>
    <property type="match status" value="1"/>
</dbReference>
<dbReference type="FunFam" id="1.10.287.110:FF:000001">
    <property type="entry name" value="Import inner membrane translocase subunit tim14"/>
    <property type="match status" value="1"/>
</dbReference>
<dbReference type="Gene3D" id="1.10.287.110">
    <property type="entry name" value="DnaJ domain"/>
    <property type="match status" value="1"/>
</dbReference>
<dbReference type="InterPro" id="IPR001623">
    <property type="entry name" value="DnaJ_domain"/>
</dbReference>
<dbReference type="InterPro" id="IPR036869">
    <property type="entry name" value="J_dom_sf"/>
</dbReference>
<dbReference type="PANTHER" id="PTHR12763">
    <property type="match status" value="1"/>
</dbReference>
<dbReference type="PANTHER" id="PTHR12763:SF7">
    <property type="entry name" value="DNAJ HOMOLOG SUBFAMILY C MEMBER 15"/>
    <property type="match status" value="1"/>
</dbReference>
<dbReference type="Pfam" id="PF00226">
    <property type="entry name" value="DnaJ"/>
    <property type="match status" value="1"/>
</dbReference>
<dbReference type="SMART" id="SM00271">
    <property type="entry name" value="DnaJ"/>
    <property type="match status" value="1"/>
</dbReference>
<dbReference type="SUPFAM" id="SSF46565">
    <property type="entry name" value="Chaperone J-domain"/>
    <property type="match status" value="1"/>
</dbReference>
<dbReference type="PROSITE" id="PS50076">
    <property type="entry name" value="DNAJ_2"/>
    <property type="match status" value="1"/>
</dbReference>